<keyword id="KW-0064">Aspartyl protease</keyword>
<keyword id="KW-0067">ATP-binding</keyword>
<keyword id="KW-0963">Cytoplasm</keyword>
<keyword id="KW-0229">DNA integration</keyword>
<keyword id="KW-0233">DNA recombination</keyword>
<keyword id="KW-0238">DNA-binding</keyword>
<keyword id="KW-0239">DNA-directed DNA polymerase</keyword>
<keyword id="KW-0255">Endonuclease</keyword>
<keyword id="KW-0378">Hydrolase</keyword>
<keyword id="KW-0460">Magnesium</keyword>
<keyword id="KW-0479">Metal-binding</keyword>
<keyword id="KW-0511">Multifunctional enzyme</keyword>
<keyword id="KW-0540">Nuclease</keyword>
<keyword id="KW-0547">Nucleotide-binding</keyword>
<keyword id="KW-0548">Nucleotidyltransferase</keyword>
<keyword id="KW-0539">Nucleus</keyword>
<keyword id="KW-0645">Protease</keyword>
<keyword id="KW-1185">Reference proteome</keyword>
<keyword id="KW-0688">Ribosomal frameshifting</keyword>
<keyword id="KW-0694">RNA-binding</keyword>
<keyword id="KW-0695">RNA-directed DNA polymerase</keyword>
<keyword id="KW-0808">Transferase</keyword>
<keyword id="KW-0814">Transposable element</keyword>
<keyword id="KW-0815">Transposition</keyword>
<keyword id="KW-1188">Viral release from host cell</keyword>
<keyword id="KW-0917">Virion maturation</keyword>
<keyword id="KW-0862">Zinc</keyword>
<keyword id="KW-0863">Zinc-finger</keyword>
<dbReference type="EC" id="3.4.23.-"/>
<dbReference type="EC" id="2.7.7.49"/>
<dbReference type="EC" id="2.7.7.7"/>
<dbReference type="EC" id="3.1.26.4"/>
<dbReference type="EMBL" id="U18917">
    <property type="protein sequence ID" value="AAB64687.1"/>
    <property type="molecule type" value="Genomic_DNA"/>
</dbReference>
<dbReference type="EMBL" id="BK006939">
    <property type="protein sequence ID" value="DAA07821.1"/>
    <property type="molecule type" value="Genomic_DNA"/>
</dbReference>
<dbReference type="PIR" id="S40969">
    <property type="entry name" value="S40969"/>
</dbReference>
<dbReference type="PIR" id="S50663">
    <property type="entry name" value="S50663"/>
</dbReference>
<dbReference type="RefSeq" id="NP_011087.3">
    <molecule id="Q03619-1"/>
    <property type="nucleotide sequence ID" value="NM_001179050.4"/>
</dbReference>
<dbReference type="BioGRID" id="36912">
    <property type="interactions" value="9"/>
</dbReference>
<dbReference type="DIP" id="DIP-8791N"/>
<dbReference type="FunCoup" id="Q03619">
    <property type="interactions" value="189"/>
</dbReference>
<dbReference type="IntAct" id="Q03619">
    <property type="interactions" value="3"/>
</dbReference>
<dbReference type="MINT" id="Q03619"/>
<dbReference type="GlyGen" id="Q03619">
    <property type="glycosylation" value="3 sites"/>
</dbReference>
<dbReference type="iPTMnet" id="Q03619"/>
<dbReference type="PaxDb" id="4932-YER160C"/>
<dbReference type="PeptideAtlas" id="Q03619"/>
<dbReference type="GeneID" id="856906"/>
<dbReference type="KEGG" id="sce:YER160C"/>
<dbReference type="AGR" id="SGD:S000000962"/>
<dbReference type="SGD" id="S000000962">
    <property type="gene designation" value="YER160C"/>
</dbReference>
<dbReference type="VEuPathDB" id="FungiDB:YER160C"/>
<dbReference type="eggNOG" id="KOG0017">
    <property type="taxonomic scope" value="Eukaryota"/>
</dbReference>
<dbReference type="HOGENOM" id="CLU_244151_0_0_1"/>
<dbReference type="InParanoid" id="Q03619"/>
<dbReference type="OrthoDB" id="4046078at2759"/>
<dbReference type="Proteomes" id="UP000002311">
    <property type="component" value="Chromosome V"/>
</dbReference>
<dbReference type="RNAct" id="Q03619">
    <property type="molecule type" value="protein"/>
</dbReference>
<dbReference type="GO" id="GO:0005737">
    <property type="term" value="C:cytoplasm"/>
    <property type="evidence" value="ECO:0007669"/>
    <property type="project" value="UniProtKB-SubCell"/>
</dbReference>
<dbReference type="GO" id="GO:0005634">
    <property type="term" value="C:nucleus"/>
    <property type="evidence" value="ECO:0000314"/>
    <property type="project" value="SGD"/>
</dbReference>
<dbReference type="GO" id="GO:0004190">
    <property type="term" value="F:aspartic-type endopeptidase activity"/>
    <property type="evidence" value="ECO:0007669"/>
    <property type="project" value="UniProtKB-KW"/>
</dbReference>
<dbReference type="GO" id="GO:0005524">
    <property type="term" value="F:ATP binding"/>
    <property type="evidence" value="ECO:0007669"/>
    <property type="project" value="UniProtKB-KW"/>
</dbReference>
<dbReference type="GO" id="GO:0003677">
    <property type="term" value="F:DNA binding"/>
    <property type="evidence" value="ECO:0007669"/>
    <property type="project" value="UniProtKB-KW"/>
</dbReference>
<dbReference type="GO" id="GO:0003887">
    <property type="term" value="F:DNA-directed DNA polymerase activity"/>
    <property type="evidence" value="ECO:0007669"/>
    <property type="project" value="UniProtKB-KW"/>
</dbReference>
<dbReference type="GO" id="GO:0003723">
    <property type="term" value="F:RNA binding"/>
    <property type="evidence" value="ECO:0007669"/>
    <property type="project" value="UniProtKB-KW"/>
</dbReference>
<dbReference type="GO" id="GO:0003964">
    <property type="term" value="F:RNA-directed DNA polymerase activity"/>
    <property type="evidence" value="ECO:0007669"/>
    <property type="project" value="UniProtKB-KW"/>
</dbReference>
<dbReference type="GO" id="GO:0004523">
    <property type="term" value="F:RNA-DNA hybrid ribonuclease activity"/>
    <property type="evidence" value="ECO:0007669"/>
    <property type="project" value="UniProtKB-EC"/>
</dbReference>
<dbReference type="GO" id="GO:0008270">
    <property type="term" value="F:zinc ion binding"/>
    <property type="evidence" value="ECO:0007669"/>
    <property type="project" value="UniProtKB-KW"/>
</dbReference>
<dbReference type="GO" id="GO:0015074">
    <property type="term" value="P:DNA integration"/>
    <property type="evidence" value="ECO:0007669"/>
    <property type="project" value="UniProtKB-KW"/>
</dbReference>
<dbReference type="GO" id="GO:0006310">
    <property type="term" value="P:DNA recombination"/>
    <property type="evidence" value="ECO:0007669"/>
    <property type="project" value="UniProtKB-KW"/>
</dbReference>
<dbReference type="GO" id="GO:0006508">
    <property type="term" value="P:proteolysis"/>
    <property type="evidence" value="ECO:0007669"/>
    <property type="project" value="UniProtKB-KW"/>
</dbReference>
<dbReference type="GO" id="GO:0032196">
    <property type="term" value="P:transposition"/>
    <property type="evidence" value="ECO:0007669"/>
    <property type="project" value="UniProtKB-KW"/>
</dbReference>
<dbReference type="GO" id="GO:0075523">
    <property type="term" value="P:viral translational frameshifting"/>
    <property type="evidence" value="ECO:0007669"/>
    <property type="project" value="UniProtKB-KW"/>
</dbReference>
<dbReference type="CDD" id="cd09272">
    <property type="entry name" value="RNase_HI_RT_Ty1"/>
    <property type="match status" value="1"/>
</dbReference>
<dbReference type="FunFam" id="3.30.420.10:FF:000050">
    <property type="entry name" value="Transposon Ty2-DR3 Gag-Pol polyprotein"/>
    <property type="match status" value="1"/>
</dbReference>
<dbReference type="Gene3D" id="3.30.420.10">
    <property type="entry name" value="Ribonuclease H-like superfamily/Ribonuclease H"/>
    <property type="match status" value="1"/>
</dbReference>
<dbReference type="InterPro" id="IPR001969">
    <property type="entry name" value="Aspartic_peptidase_AS"/>
</dbReference>
<dbReference type="InterPro" id="IPR043502">
    <property type="entry name" value="DNA/RNA_pol_sf"/>
</dbReference>
<dbReference type="InterPro" id="IPR001584">
    <property type="entry name" value="Integrase_cat-core"/>
</dbReference>
<dbReference type="InterPro" id="IPR039537">
    <property type="entry name" value="Retrotran_Ty1/copia-like"/>
</dbReference>
<dbReference type="InterPro" id="IPR012337">
    <property type="entry name" value="RNaseH-like_sf"/>
</dbReference>
<dbReference type="InterPro" id="IPR036397">
    <property type="entry name" value="RNaseH_sf"/>
</dbReference>
<dbReference type="InterPro" id="IPR013103">
    <property type="entry name" value="RVT_2"/>
</dbReference>
<dbReference type="InterPro" id="IPR015820">
    <property type="entry name" value="TYA"/>
</dbReference>
<dbReference type="PANTHER" id="PTHR42648">
    <property type="entry name" value="TRANSPOSASE, PUTATIVE-RELATED"/>
    <property type="match status" value="1"/>
</dbReference>
<dbReference type="PANTHER" id="PTHR42648:SF11">
    <property type="entry name" value="TRANSPOSON TY4-P GAG-POL POLYPROTEIN"/>
    <property type="match status" value="1"/>
</dbReference>
<dbReference type="Pfam" id="PF00665">
    <property type="entry name" value="rve"/>
    <property type="match status" value="1"/>
</dbReference>
<dbReference type="Pfam" id="PF07727">
    <property type="entry name" value="RVT_2"/>
    <property type="match status" value="1"/>
</dbReference>
<dbReference type="Pfam" id="PF01021">
    <property type="entry name" value="TYA"/>
    <property type="match status" value="1"/>
</dbReference>
<dbReference type="SUPFAM" id="SSF56672">
    <property type="entry name" value="DNA/RNA polymerases"/>
    <property type="match status" value="1"/>
</dbReference>
<dbReference type="SUPFAM" id="SSF53098">
    <property type="entry name" value="Ribonuclease H-like"/>
    <property type="match status" value="1"/>
</dbReference>
<dbReference type="PROSITE" id="PS00141">
    <property type="entry name" value="ASP_PROTEASE"/>
    <property type="match status" value="1"/>
</dbReference>
<dbReference type="PROSITE" id="PS50994">
    <property type="entry name" value="INTEGRASE"/>
    <property type="match status" value="1"/>
</dbReference>
<proteinExistence type="inferred from homology"/>
<organism>
    <name type="scientific">Saccharomyces cerevisiae (strain ATCC 204508 / S288c)</name>
    <name type="common">Baker's yeast</name>
    <dbReference type="NCBI Taxonomy" id="559292"/>
    <lineage>
        <taxon>Eukaryota</taxon>
        <taxon>Fungi</taxon>
        <taxon>Dikarya</taxon>
        <taxon>Ascomycota</taxon>
        <taxon>Saccharomycotina</taxon>
        <taxon>Saccharomycetes</taxon>
        <taxon>Saccharomycetales</taxon>
        <taxon>Saccharomycetaceae</taxon>
        <taxon>Saccharomyces</taxon>
    </lineage>
</organism>
<sequence>MESQQLSNYPHISHGSACASVTSKEVHTNQDPLDVSASKIQEYDKASTKANSQQTTTPASSAVPENPHHASPQPASVPPPQNGPYPQQCMMTQNQANPSGWSFYGHPSMIPYTPYQMSPMYFPPGPQSQFPQYPSSVGTPLSTPSPESGNTFTDSSSADSDMTSTKKYVRPPPMLTSPNDFPNWVKTYIKFLQNSNLGGIIPTVNGKPVRQITDDELTFLYNTFQIFAPSQFLPTWVKDILSVDYTDIMKILSKSIEKMQSDTQEANDIVTLANLQYNGSTPADAFETKVTNIIDRLNNNGIHINNKVACQLIMRGLSGEYKFLRYTRHRHLNMTVAELFLDIHAIYEEQQGSRNSKPNYRRNPSDEKNDSRSYTNTTKPKVIARNPQKTNNSKSKTARAHNVSTSNNSPSTDNDSISKSTTEPIQLNNKHDLHLGQKLTESTVNHTNHSDDELPGHLLLDSGASRTLIRSAHHIHSASSNPDINVVDAQKRNIPINAIGDLQFHFQDNTKTSIKVLHTPNIAYDLLSLNELAAVDITACFTKNVLERSDGTVLAPIVKYGDFYWVSKKYLLPSNISVPTINNVHTSESTRKYPYPFIHRMLAHANAQTIRYSLKNNTITYFNESDVDWSSAIDYQCPDCLIGKSTKHRHIKGSRLKYQNSYEPFQYLHTDIFGPVHNLPKSAPSYFISFTDETTKFRWVYPLHDRREDSILDVFTTILAFIKNQFQASVLVIQMDRGSEYTNRTLHKFLEKNGITPCYTTTADSRAHGVAERLNRTLLDDCRTQLQCSGLPNHLWFSAIEFSTIVRNSLASPKSKKSARQHAGLAGLDISTLLPFGQPVIVNDHNPNSKIHPRGIPGYALHPSRNSYGYIIYLPSLKKTVDTTNYVILQGKESRLDQFNYDALTFDEDLNRLTASYHSFIASNEIQQSNDLNIESDHDFQSDIELHPEQLRNVLSKAVSPTDSTPPSTHTEDSKRVSKTNIRAPREVDPNISESNILPSKKRSSTPQISDIESTGSGGMHRLDVPLLAPMSQSNTHESSHASKSKDFRHSDSYSDNETNHTNVPISSTGGTNNKTVPQTSEQETEKRIIHRSPSIDTSSSESNSLHHVVPIKTSDTCPKENTEESIIADLPLPDLPPEPPTELSDSFKELPPINSHQTNSSLGGIGDSNAYTTINSKKRSLEDNETEIKVSRDTWNTKNMRSLEPPRSKKRIHLIAAVKAVKSIKPIRTTLRYDEAITYNKDIKEKEKYIQAYHKEVNQLLKMKTWDTDRYYDRKEIDPKRVINSMFIFNRKRDGTHKARFVARGDIQHPDTYDPGMQSNTVHHYALMTSLSLALDNNYYITQLDISSAYLYADIKEELYIRPPPHLGMNDKLIRLKKSLYGLKQSGANWYETIKSYLIKQCGMEEVRGWSCVFKNSQVTICLFVDDMILFSKDLNANKKIITTLKKQYDTKIINLGESDNEIQYDILGLEIKYQRGKYMKLGMENSLTEKIPKLNVPLNPKGRKLSAPGQPGLYIDQQELELEEDDYKMKVHEMQKLIGLASYVGYKFRFDLLYYINTLAQHILFPSKQVLDMTYELIQFIWNTRDKQLIWHKSKPVKPTNKLVVISDASYGNQPYYKSQIGNIYLLNGKVIGGKSTKASLTCTSTTEAEIHAISESVPLLNNLSHLVQELNKKPITKGLLTDSKSTISIIISNNEEKFRNRFFGTKAMRLRDEVSGNHLHVCYIETKKNIADVMTKPLPIKTFKLLTNKWIH</sequence>
<accession>Q03619</accession>
<accession>D3DM67</accession>
<gene>
    <name type="primary">TY1B-ER2</name>
    <name type="synonym">YERCTy1-2 POL</name>
    <name type="ordered locus">YER160C</name>
</gene>
<comment type="function">
    <text evidence="1">Capsid protein (CA) is the structural component of the virus-like particle (VLP), forming the shell that encapsulates the retrotransposons dimeric RNA genome. The particles are assembled from trimer-clustered units and there are holes in the capsid shells that allow for the diffusion of macromolecules. CA also has nucleocapsid-like chaperone activity, promoting primer tRNA(i)-Met annealing to the multipartite primer-binding site (PBS), dimerization of Ty1 RNA and initiation of reverse transcription (By similarity).</text>
</comment>
<comment type="function">
    <text evidence="1">The aspartyl protease (PR) mediates the proteolytic cleavages of the Gag and Gag-Pol polyproteins after assembly of the VLP.</text>
</comment>
<comment type="function">
    <text evidence="1">Reverse transcriptase/ribonuclease H (RT) is a multifunctional enzyme that catalyzes the conversion of the retro-elements RNA genome into dsDNA within the VLP. The enzyme displays a DNA polymerase activity that can copy either DNA or RNA templates, and a ribonuclease H (RNase H) activity that cleaves the RNA strand of RNA-DNA heteroduplexes during plus-strand synthesis and hydrolyzes RNA primers. The conversion leads to a linear dsDNA copy of the retrotransposon that includes long terminal repeats (LTRs) at both ends (By similarity).</text>
</comment>
<comment type="function">
    <text evidence="1">Integrase (IN) targets the VLP to the nucleus, where a subparticle preintegration complex (PIC) containing at least integrase and the newly synthesized dsDNA copy of the retrotransposon must transit the nuclear membrane. Once in the nucleus, integrase performs the integration of the dsDNA into the host genome (By similarity).</text>
</comment>
<comment type="catalytic activity">
    <reaction>
        <text>DNA(n) + a 2'-deoxyribonucleoside 5'-triphosphate = DNA(n+1) + diphosphate</text>
        <dbReference type="Rhea" id="RHEA:22508"/>
        <dbReference type="Rhea" id="RHEA-COMP:17339"/>
        <dbReference type="Rhea" id="RHEA-COMP:17340"/>
        <dbReference type="ChEBI" id="CHEBI:33019"/>
        <dbReference type="ChEBI" id="CHEBI:61560"/>
        <dbReference type="ChEBI" id="CHEBI:173112"/>
        <dbReference type="EC" id="2.7.7.49"/>
    </reaction>
</comment>
<comment type="catalytic activity">
    <reaction>
        <text>DNA(n) + a 2'-deoxyribonucleoside 5'-triphosphate = DNA(n+1) + diphosphate</text>
        <dbReference type="Rhea" id="RHEA:22508"/>
        <dbReference type="Rhea" id="RHEA-COMP:17339"/>
        <dbReference type="Rhea" id="RHEA-COMP:17340"/>
        <dbReference type="ChEBI" id="CHEBI:33019"/>
        <dbReference type="ChEBI" id="CHEBI:61560"/>
        <dbReference type="ChEBI" id="CHEBI:173112"/>
        <dbReference type="EC" id="2.7.7.7"/>
    </reaction>
</comment>
<comment type="catalytic activity">
    <reaction>
        <text>Endonucleolytic cleavage to 5'-phosphomonoester.</text>
        <dbReference type="EC" id="3.1.26.4"/>
    </reaction>
</comment>
<comment type="subunit">
    <text evidence="1">The capsid protein forms a homotrimer, from which the VLPs are assembled. The protease is a homodimer, whose active site consists of two apposed aspartic acid residues (By similarity).</text>
</comment>
<comment type="subcellular location">
    <subcellularLocation>
        <location>Cytoplasm</location>
    </subcellularLocation>
    <subcellularLocation>
        <location evidence="1">Nucleus</location>
    </subcellularLocation>
</comment>
<comment type="alternative products">
    <event type="ribosomal frameshifting"/>
    <isoform>
        <id>Q03619-1</id>
        <name>Transposon Ty1-ER2 Gag-Pol polyprotein</name>
        <sequence type="displayed"/>
    </isoform>
    <isoform>
        <id>P0CX66-1</id>
        <name>Transposon Ty1-ER2 Gag polyprotein</name>
        <sequence type="external"/>
    </isoform>
    <text evidence="1">The Gag-Pol polyprotein is generated by a +1 ribosomal frameshift between the codons for Leu-435 and Gly-436. The ratio of Gag:Gag-Pol varies between 20:1 and 5:1 (By similarity).</text>
</comment>
<comment type="domain">
    <text evidence="1">The C-terminal RNA-binding region of CA is sufficient for all its nucleocapsid-like chaperone activities.</text>
</comment>
<comment type="domain">
    <text evidence="1">Integrase core domain contains the D-x(n)-D-x(35)-E motif, named for the phylogenetically conserved glutamic acid and aspartic acid residues and the invariant 35 amino acid spacing between the second and third acidic residues. Each acidic residue of the D,D(35)E motif is independently essential for the 3'-processing and strand transfer activities of purified integrase protein (By similarity).</text>
</comment>
<comment type="PTM">
    <text evidence="1">Initially, virus-like particles (VLPs) are composed of the structural unprocessed proteins Gag and Gag-Pol, and also contain the host initiator methionine tRNA (tRNA(i)-Met) which serves as a primer for minus-strand DNA synthesis, and a dimer of genomic Ty RNA. Processing of the polyproteins occurs within the particle and proceeds by an ordered pathway, called maturation. First, the protease (PR) is released by autocatalytic cleavage of the Gag-Pol polyprotein yielding capsid protein p45 and a Pol-p154 precursor protein. This cleavage is a prerequisite for subsequent processing of Pol-p154 at the remaining sites to release the mature structural and catalytic proteins. Maturation takes place prior to the RT reaction and is required to produce transposition-competent VLPs (By similarity).</text>
</comment>
<comment type="miscellaneous">
    <text>Retrotransposons are mobile genetic entities that are able to replicate via an RNA intermediate and a reverse transcription step. In contrast to retroviruses, retrotransposons are non-infectious, lack an envelope and remain intracellular. Ty1 retrotransposons belong to the copia elements (pseudoviridae).</text>
</comment>
<comment type="miscellaneous">
    <molecule>Isoform Transposon Ty1-ER2 Gag-Pol polyprotein</molecule>
    <text>Produced by +1 ribosomal frameshifting between codon Leu-435 and Gly-436 of the YER159C-A ORF.</text>
</comment>
<reference key="1">
    <citation type="journal article" date="1997" name="Nature">
        <title>The nucleotide sequence of Saccharomyces cerevisiae chromosome V.</title>
        <authorList>
            <person name="Dietrich F.S."/>
            <person name="Mulligan J.T."/>
            <person name="Hennessy K.M."/>
            <person name="Yelton M.A."/>
            <person name="Allen E."/>
            <person name="Araujo R."/>
            <person name="Aviles E."/>
            <person name="Berno A."/>
            <person name="Brennan T."/>
            <person name="Carpenter J."/>
            <person name="Chen E."/>
            <person name="Cherry J.M."/>
            <person name="Chung E."/>
            <person name="Duncan M."/>
            <person name="Guzman E."/>
            <person name="Hartzell G."/>
            <person name="Hunicke-Smith S."/>
            <person name="Hyman R.W."/>
            <person name="Kayser A."/>
            <person name="Komp C."/>
            <person name="Lashkari D."/>
            <person name="Lew H."/>
            <person name="Lin D."/>
            <person name="Mosedale D."/>
            <person name="Nakahara K."/>
            <person name="Namath A."/>
            <person name="Norgren R."/>
            <person name="Oefner P."/>
            <person name="Oh C."/>
            <person name="Petel F.X."/>
            <person name="Roberts D."/>
            <person name="Sehl P."/>
            <person name="Schramm S."/>
            <person name="Shogren T."/>
            <person name="Smith V."/>
            <person name="Taylor P."/>
            <person name="Wei Y."/>
            <person name="Botstein D."/>
            <person name="Davis R.W."/>
        </authorList>
    </citation>
    <scope>NUCLEOTIDE SEQUENCE [LARGE SCALE GENOMIC DNA]</scope>
    <source>
        <strain>ATCC 204508 / S288c</strain>
    </source>
</reference>
<reference key="2">
    <citation type="journal article" date="2014" name="G3 (Bethesda)">
        <title>The reference genome sequence of Saccharomyces cerevisiae: Then and now.</title>
        <authorList>
            <person name="Engel S.R."/>
            <person name="Dietrich F.S."/>
            <person name="Fisk D.G."/>
            <person name="Binkley G."/>
            <person name="Balakrishnan R."/>
            <person name="Costanzo M.C."/>
            <person name="Dwight S.S."/>
            <person name="Hitz B.C."/>
            <person name="Karra K."/>
            <person name="Nash R.S."/>
            <person name="Weng S."/>
            <person name="Wong E.D."/>
            <person name="Lloyd P."/>
            <person name="Skrzypek M.S."/>
            <person name="Miyasato S.R."/>
            <person name="Simison M."/>
            <person name="Cherry J.M."/>
        </authorList>
    </citation>
    <scope>GENOME REANNOTATION</scope>
    <source>
        <strain>ATCC 204508 / S288c</strain>
    </source>
</reference>
<reference key="3">
    <citation type="journal article" date="1998" name="Genome Res.">
        <title>Transposable elements and genome organization: a comprehensive survey of retrotransposons revealed by the complete Saccharomyces cerevisiae genome sequence.</title>
        <authorList>
            <person name="Kim J.M."/>
            <person name="Vanguri S."/>
            <person name="Boeke J.D."/>
            <person name="Gabriel A."/>
            <person name="Voytas D.F."/>
        </authorList>
    </citation>
    <scope>NOMENCLATURE</scope>
</reference>
<reference key="4">
    <citation type="journal article" date="2005" name="Cytogenet. Genome Res.">
        <title>Happy together: the life and times of Ty retrotransposons and their hosts.</title>
        <authorList>
            <person name="Lesage P."/>
            <person name="Todeschini A.L."/>
        </authorList>
    </citation>
    <scope>REVIEW</scope>
</reference>
<reference key="5">
    <citation type="journal article" date="2005" name="Cytogenet. Genome Res.">
        <title>Reverse transcriptase and integrase of the Saccharomyces cerevisiae Ty1 element.</title>
        <authorList>
            <person name="Wilhelm F.-X."/>
            <person name="Wilhelm M."/>
            <person name="Gabriel A."/>
        </authorList>
    </citation>
    <scope>REVIEW</scope>
    <scope>DOMAINS</scope>
</reference>
<feature type="chain" id="PRO_0000279048" description="Transposon Ty1-ER2 Gag-Pol polyprotein">
    <location>
        <begin position="1"/>
        <end position="1755"/>
    </location>
</feature>
<feature type="chain" id="PRO_0000279049" description="Capsid protein" evidence="1">
    <location>
        <begin position="1"/>
        <end position="401"/>
    </location>
</feature>
<feature type="chain" id="PRO_0000279050" description="Ty1 protease" evidence="1">
    <location>
        <begin position="402"/>
        <end position="582"/>
    </location>
</feature>
<feature type="chain" id="PRO_0000279051" description="Integrase" evidence="1">
    <location>
        <begin position="583"/>
        <end position="1217"/>
    </location>
</feature>
<feature type="chain" id="PRO_0000279052" description="Reverse transcriptase/ribonuclease H" evidence="1">
    <location>
        <begin position="1218"/>
        <end position="1755"/>
    </location>
</feature>
<feature type="domain" description="Integrase catalytic" evidence="2">
    <location>
        <begin position="660"/>
        <end position="835"/>
    </location>
</feature>
<feature type="domain" description="Reverse transcriptase Ty1/copia-type">
    <location>
        <begin position="1338"/>
        <end position="1476"/>
    </location>
</feature>
<feature type="domain" description="RNase H Ty1/copia-type">
    <location>
        <begin position="1610"/>
        <end position="1752"/>
    </location>
</feature>
<feature type="region of interest" description="Disordered" evidence="4">
    <location>
        <begin position="1"/>
        <end position="93"/>
    </location>
</feature>
<feature type="region of interest" description="Disordered" evidence="4">
    <location>
        <begin position="126"/>
        <end position="173"/>
    </location>
</feature>
<feature type="region of interest" description="RNA-binding" evidence="1">
    <location>
        <begin position="299"/>
        <end position="401"/>
    </location>
</feature>
<feature type="region of interest" description="Disordered" evidence="4">
    <location>
        <begin position="352"/>
        <end position="421"/>
    </location>
</feature>
<feature type="region of interest" description="Integrase-type zinc finger-like">
    <location>
        <begin position="583"/>
        <end position="640"/>
    </location>
</feature>
<feature type="region of interest" description="Disordered" evidence="4">
    <location>
        <begin position="958"/>
        <end position="1170"/>
    </location>
</feature>
<feature type="short sequence motif" description="Bipartite nuclear localization signal" evidence="1">
    <location>
        <begin position="1178"/>
        <end position="1212"/>
    </location>
</feature>
<feature type="compositionally biased region" description="Polar residues" evidence="4">
    <location>
        <begin position="1"/>
        <end position="10"/>
    </location>
</feature>
<feature type="compositionally biased region" description="Polar residues" evidence="4">
    <location>
        <begin position="48"/>
        <end position="60"/>
    </location>
</feature>
<feature type="compositionally biased region" description="Polar residues" evidence="4">
    <location>
        <begin position="127"/>
        <end position="152"/>
    </location>
</feature>
<feature type="compositionally biased region" description="Low complexity" evidence="4">
    <location>
        <begin position="153"/>
        <end position="165"/>
    </location>
</feature>
<feature type="compositionally biased region" description="Low complexity" evidence="4">
    <location>
        <begin position="402"/>
        <end position="418"/>
    </location>
</feature>
<feature type="compositionally biased region" description="Low complexity" evidence="4">
    <location>
        <begin position="960"/>
        <end position="969"/>
    </location>
</feature>
<feature type="compositionally biased region" description="Polar residues" evidence="4">
    <location>
        <begin position="1005"/>
        <end position="1015"/>
    </location>
</feature>
<feature type="compositionally biased region" description="Basic and acidic residues" evidence="4">
    <location>
        <begin position="1038"/>
        <end position="1053"/>
    </location>
</feature>
<feature type="compositionally biased region" description="Polar residues" evidence="4">
    <location>
        <begin position="1054"/>
        <end position="1082"/>
    </location>
</feature>
<feature type="compositionally biased region" description="Polar residues" evidence="4">
    <location>
        <begin position="1095"/>
        <end position="1106"/>
    </location>
</feature>
<feature type="active site" description="For protease activity; shared with dimeric partner" evidence="3">
    <location>
        <position position="461"/>
    </location>
</feature>
<feature type="binding site" evidence="2">
    <location>
        <position position="671"/>
    </location>
    <ligand>
        <name>Mg(2+)</name>
        <dbReference type="ChEBI" id="CHEBI:18420"/>
        <label>1</label>
        <note>catalytic; for integrase activity</note>
    </ligand>
</feature>
<feature type="binding site" evidence="2">
    <location>
        <position position="736"/>
    </location>
    <ligand>
        <name>Mg(2+)</name>
        <dbReference type="ChEBI" id="CHEBI:18420"/>
        <label>1</label>
        <note>catalytic; for integrase activity</note>
    </ligand>
</feature>
<feature type="binding site" evidence="2">
    <location>
        <position position="1346"/>
    </location>
    <ligand>
        <name>Mg(2+)</name>
        <dbReference type="ChEBI" id="CHEBI:18420"/>
        <label>2</label>
        <note>catalytic; for reverse transcriptase activity</note>
    </ligand>
</feature>
<feature type="binding site" evidence="2">
    <location>
        <position position="1427"/>
    </location>
    <ligand>
        <name>Mg(2+)</name>
        <dbReference type="ChEBI" id="CHEBI:18420"/>
        <label>2</label>
        <note>catalytic; for reverse transcriptase activity</note>
    </ligand>
</feature>
<feature type="binding site" evidence="2">
    <location>
        <position position="1428"/>
    </location>
    <ligand>
        <name>Mg(2+)</name>
        <dbReference type="ChEBI" id="CHEBI:18420"/>
        <label>2</label>
        <note>catalytic; for reverse transcriptase activity</note>
    </ligand>
</feature>
<feature type="binding site" evidence="2">
    <location>
        <position position="1610"/>
    </location>
    <ligand>
        <name>Mg(2+)</name>
        <dbReference type="ChEBI" id="CHEBI:18420"/>
        <label>3</label>
        <note>catalytic; for RNase H activity</note>
    </ligand>
</feature>
<feature type="binding site" evidence="2">
    <location>
        <position position="1652"/>
    </location>
    <ligand>
        <name>Mg(2+)</name>
        <dbReference type="ChEBI" id="CHEBI:18420"/>
        <label>3</label>
        <note>catalytic; for RNase H activity</note>
    </ligand>
</feature>
<feature type="binding site" evidence="2">
    <location>
        <position position="1685"/>
    </location>
    <ligand>
        <name>Mg(2+)</name>
        <dbReference type="ChEBI" id="CHEBI:18420"/>
        <label>3</label>
        <note>catalytic; for RNase H activity</note>
    </ligand>
</feature>
<feature type="site" description="Cleavage; by Ty1 protease" evidence="1">
    <location>
        <begin position="401"/>
        <end position="402"/>
    </location>
</feature>
<feature type="site" description="Cleavage; by Ty1 protease" evidence="1">
    <location>
        <begin position="582"/>
        <end position="583"/>
    </location>
</feature>
<feature type="site" description="Cleavage; by Ty1 protease" evidence="1">
    <location>
        <begin position="1217"/>
        <end position="1218"/>
    </location>
</feature>
<protein>
    <recommendedName>
        <fullName>Transposon Ty1-ER2 Gag-Pol polyprotein</fullName>
    </recommendedName>
    <alternativeName>
        <fullName>Gag-Pol-p199</fullName>
    </alternativeName>
    <alternativeName>
        <fullName>TY1A-TY1B</fullName>
    </alternativeName>
    <alternativeName>
        <fullName>Transposon Ty1 TYA-TYB polyprotein</fullName>
    </alternativeName>
    <alternativeName>
        <fullName>p190</fullName>
    </alternativeName>
    <component>
        <recommendedName>
            <fullName>Capsid protein</fullName>
            <shortName>CA</shortName>
        </recommendedName>
        <alternativeName>
            <fullName>Gag-p45</fullName>
        </alternativeName>
        <alternativeName>
            <fullName>p54</fullName>
        </alternativeName>
    </component>
    <component>
        <recommendedName>
            <fullName>Ty1 protease</fullName>
            <shortName>PR</shortName>
            <ecNumber>3.4.23.-</ecNumber>
        </recommendedName>
        <alternativeName>
            <fullName>Pol-p20</fullName>
        </alternativeName>
        <alternativeName>
            <fullName>p23</fullName>
        </alternativeName>
    </component>
    <component>
        <recommendedName>
            <fullName>Integrase</fullName>
            <shortName>IN</shortName>
        </recommendedName>
        <alternativeName>
            <fullName>Pol-p71</fullName>
        </alternativeName>
        <alternativeName>
            <fullName>p84</fullName>
        </alternativeName>
        <alternativeName>
            <fullName>p90</fullName>
        </alternativeName>
    </component>
    <component>
        <recommendedName>
            <fullName>Reverse transcriptase/ribonuclease H</fullName>
            <shortName>RT</shortName>
            <shortName>RT-RH</shortName>
            <ecNumber>2.7.7.49</ecNumber>
            <ecNumber>2.7.7.7</ecNumber>
            <ecNumber>3.1.26.4</ecNumber>
        </recommendedName>
        <alternativeName>
            <fullName>Pol-p63</fullName>
        </alternativeName>
        <alternativeName>
            <fullName>p60</fullName>
        </alternativeName>
    </component>
</protein>
<evidence type="ECO:0000250" key="1"/>
<evidence type="ECO:0000255" key="2">
    <source>
        <dbReference type="PROSITE-ProRule" id="PRU00457"/>
    </source>
</evidence>
<evidence type="ECO:0000255" key="3">
    <source>
        <dbReference type="PROSITE-ProRule" id="PRU10094"/>
    </source>
</evidence>
<evidence type="ECO:0000256" key="4">
    <source>
        <dbReference type="SAM" id="MobiDB-lite"/>
    </source>
</evidence>
<name>YE12B_YEAST</name>